<dbReference type="EMBL" id="M96565">
    <property type="protein sequence ID" value="AAA29054.1"/>
    <property type="molecule type" value="mRNA"/>
</dbReference>
<dbReference type="EMBL" id="M84807">
    <property type="protein sequence ID" value="AAA29055.1"/>
    <property type="molecule type" value="mRNA"/>
</dbReference>
<dbReference type="EMBL" id="M95052">
    <property type="protein sequence ID" value="AAA29061.1"/>
    <property type="molecule type" value="mRNA"/>
</dbReference>
<dbReference type="PIR" id="A48580">
    <property type="entry name" value="A48580"/>
</dbReference>
<dbReference type="SMR" id="Q07840"/>
<dbReference type="eggNOG" id="KOG2856">
    <property type="taxonomic scope" value="Eukaryota"/>
</dbReference>
<dbReference type="GO" id="GO:0005768">
    <property type="term" value="C:endosome"/>
    <property type="evidence" value="ECO:0007669"/>
    <property type="project" value="TreeGrafter"/>
</dbReference>
<dbReference type="GO" id="GO:0005886">
    <property type="term" value="C:plasma membrane"/>
    <property type="evidence" value="ECO:0007669"/>
    <property type="project" value="TreeGrafter"/>
</dbReference>
<dbReference type="GO" id="GO:0005543">
    <property type="term" value="F:phospholipid binding"/>
    <property type="evidence" value="ECO:0007669"/>
    <property type="project" value="TreeGrafter"/>
</dbReference>
<dbReference type="GO" id="GO:0007010">
    <property type="term" value="P:cytoskeleton organization"/>
    <property type="evidence" value="ECO:0007669"/>
    <property type="project" value="TreeGrafter"/>
</dbReference>
<dbReference type="GO" id="GO:0097320">
    <property type="term" value="P:plasma membrane tubulation"/>
    <property type="evidence" value="ECO:0007669"/>
    <property type="project" value="TreeGrafter"/>
</dbReference>
<dbReference type="GO" id="GO:0030100">
    <property type="term" value="P:regulation of endocytosis"/>
    <property type="evidence" value="ECO:0007669"/>
    <property type="project" value="TreeGrafter"/>
</dbReference>
<dbReference type="CDD" id="cd11843">
    <property type="entry name" value="SH3_PACSIN"/>
    <property type="match status" value="1"/>
</dbReference>
<dbReference type="FunFam" id="2.30.30.40:FF:000014">
    <property type="entry name" value="Kinase C and casein kinase substrate in neurons protein"/>
    <property type="match status" value="1"/>
</dbReference>
<dbReference type="FunFam" id="1.20.1270.60:FF:000205">
    <property type="entry name" value="Protein kinase C and casein kinase substrate in neurons protein 1"/>
    <property type="match status" value="1"/>
</dbReference>
<dbReference type="Gene3D" id="1.20.1270.60">
    <property type="entry name" value="Arfaptin homology (AH) domain/BAR domain"/>
    <property type="match status" value="1"/>
</dbReference>
<dbReference type="Gene3D" id="2.30.30.40">
    <property type="entry name" value="SH3 Domains"/>
    <property type="match status" value="1"/>
</dbReference>
<dbReference type="InterPro" id="IPR027267">
    <property type="entry name" value="AH/BAR_dom_sf"/>
</dbReference>
<dbReference type="InterPro" id="IPR031160">
    <property type="entry name" value="F_BAR"/>
</dbReference>
<dbReference type="InterPro" id="IPR036028">
    <property type="entry name" value="SH3-like_dom_sf"/>
</dbReference>
<dbReference type="InterPro" id="IPR001452">
    <property type="entry name" value="SH3_domain"/>
</dbReference>
<dbReference type="PANTHER" id="PTHR23065">
    <property type="entry name" value="PROLINE-SERINE-THREONINE PHOSPHATASE INTERACTING PROTEIN 1"/>
    <property type="match status" value="1"/>
</dbReference>
<dbReference type="PANTHER" id="PTHR23065:SF11">
    <property type="entry name" value="SYNDAPIN, ISOFORM C"/>
    <property type="match status" value="1"/>
</dbReference>
<dbReference type="Pfam" id="PF00018">
    <property type="entry name" value="SH3_1"/>
    <property type="match status" value="1"/>
</dbReference>
<dbReference type="SMART" id="SM00326">
    <property type="entry name" value="SH3"/>
    <property type="match status" value="1"/>
</dbReference>
<dbReference type="SUPFAM" id="SSF103657">
    <property type="entry name" value="BAR/IMD domain-like"/>
    <property type="match status" value="1"/>
</dbReference>
<dbReference type="SUPFAM" id="SSF50044">
    <property type="entry name" value="SH3-domain"/>
    <property type="match status" value="1"/>
</dbReference>
<dbReference type="PROSITE" id="PS51741">
    <property type="entry name" value="F_BAR"/>
    <property type="match status" value="1"/>
</dbReference>
<dbReference type="PROSITE" id="PS50002">
    <property type="entry name" value="SH3"/>
    <property type="match status" value="1"/>
</dbReference>
<organism>
    <name type="scientific">Echinococcus multilocularis</name>
    <name type="common">Fox tapeworm</name>
    <dbReference type="NCBI Taxonomy" id="6211"/>
    <lineage>
        <taxon>Eukaryota</taxon>
        <taxon>Metazoa</taxon>
        <taxon>Spiralia</taxon>
        <taxon>Lophotrochozoa</taxon>
        <taxon>Platyhelminthes</taxon>
        <taxon>Cestoda</taxon>
        <taxon>Eucestoda</taxon>
        <taxon>Cyclophyllidea</taxon>
        <taxon>Taeniidae</taxon>
        <taxon>Echinococcus</taxon>
    </lineage>
</organism>
<gene>
    <name type="primary">EM13</name>
</gene>
<keyword id="KW-0175">Coiled coil</keyword>
<keyword id="KW-0728">SH3 domain</keyword>
<evidence type="ECO:0000255" key="1">
    <source>
        <dbReference type="PROSITE-ProRule" id="PRU00192"/>
    </source>
</evidence>
<evidence type="ECO:0000255" key="2">
    <source>
        <dbReference type="PROSITE-ProRule" id="PRU01077"/>
    </source>
</evidence>
<evidence type="ECO:0000256" key="3">
    <source>
        <dbReference type="SAM" id="MobiDB-lite"/>
    </source>
</evidence>
<name>EM13_ECHMU</name>
<protein>
    <recommendedName>
        <fullName>Antigen EM13</fullName>
    </recommendedName>
</protein>
<reference key="1">
    <citation type="journal article" date="1993" name="Mol. Biochem. Parasitol.">
        <title>Molecular cloning of an echinococcal microtrichal antigen immunoreactive in Echinococcus multilocularis disease.</title>
        <authorList>
            <person name="Frosch P."/>
            <person name="Geier C."/>
            <person name="Muller A."/>
            <person name="Frosch M."/>
        </authorList>
    </citation>
    <scope>NUCLEOTIDE SEQUENCE [MRNA]</scope>
</reference>
<proteinExistence type="evidence at transcript level"/>
<accession>Q07840</accession>
<feature type="chain" id="PRO_0000086965" description="Antigen EM13">
    <location>
        <begin position="1"/>
        <end position="426"/>
    </location>
</feature>
<feature type="domain" description="F-BAR" evidence="2">
    <location>
        <begin position="1"/>
        <end position="240"/>
    </location>
</feature>
<feature type="domain" description="SH3" evidence="1">
    <location>
        <begin position="371"/>
        <end position="426"/>
    </location>
</feature>
<feature type="region of interest" description="Disordered" evidence="3">
    <location>
        <begin position="287"/>
        <end position="315"/>
    </location>
</feature>
<feature type="region of interest" description="Disordered" evidence="3">
    <location>
        <begin position="350"/>
        <end position="369"/>
    </location>
</feature>
<feature type="compositionally biased region" description="Polar residues" evidence="3">
    <location>
        <begin position="305"/>
        <end position="315"/>
    </location>
</feature>
<sequence length="426" mass="47535">MIQERADIEKAYASNLRKFAARLEMFLRTGVEYGTATNILSGLAKEAEDNAELHSNIAAGLINPVQLGIKNWQRENFHKSSISTSIKEVKNFDSEFENAQKTWYKHYKNVNRCKKEYFHACKTVRSLQVQVQNAKNEPFGTPEQLRKIEDKLRKGIMEEEKTRKAYEEALSSLSDVTPRYIEDMTQVFNKAQAFERERIIYFKEQALQMQEVLDISAKPNLSQIFVGLRETVAKVDADADLKKWSLAYGVDMAPNFPVFQEYSPEMSALGKKGRSALADGSSGGVTLTSLKTITSPDRGGPIPGTTDSGSNISTSPVHTTAYGSNSYDHGSEGATPSDYTSSVNGAAAAISKEKQRVEDTPPYPDFVDDGRPGVPIRALYDYVGVEADELSFNSGDLFEKLEDEDEQGWCKGRKDGRVGLYPRQLR</sequence>